<proteinExistence type="evidence at protein level"/>
<keyword id="KW-0008">Acetylcholine receptor inhibiting toxin</keyword>
<keyword id="KW-0903">Direct protein sequencing</keyword>
<keyword id="KW-1015">Disulfide bond</keyword>
<keyword id="KW-0872">Ion channel impairing toxin</keyword>
<keyword id="KW-0528">Neurotoxin</keyword>
<keyword id="KW-0629">Postsynaptic neurotoxin</keyword>
<keyword id="KW-0964">Secreted</keyword>
<keyword id="KW-0800">Toxin</keyword>
<feature type="chain" id="PRO_0000093580" description="Toxin 5" evidence="3">
    <location>
        <begin position="1"/>
        <end position="60"/>
    </location>
</feature>
<feature type="disulfide bond" evidence="1">
    <location>
        <begin position="3"/>
        <end position="22"/>
    </location>
</feature>
<feature type="disulfide bond" evidence="1">
    <location>
        <begin position="17"/>
        <end position="39"/>
    </location>
</feature>
<feature type="disulfide bond" evidence="1">
    <location>
        <begin position="41"/>
        <end position="52"/>
    </location>
</feature>
<feature type="disulfide bond" evidence="1">
    <location>
        <begin position="53"/>
        <end position="58"/>
    </location>
</feature>
<evidence type="ECO:0000250" key="1">
    <source>
        <dbReference type="UniProtKB" id="P0C1Z0"/>
    </source>
</evidence>
<evidence type="ECO:0000250" key="2">
    <source>
        <dbReference type="UniProtKB" id="P60775"/>
    </source>
</evidence>
<evidence type="ECO:0000269" key="3">
    <source>
    </source>
</evidence>
<evidence type="ECO:0000305" key="4"/>
<protein>
    <recommendedName>
        <fullName>Toxin 5</fullName>
    </recommendedName>
</protein>
<reference key="1">
    <citation type="journal article" date="1972" name="Biochemistry">
        <title>Amino acid sequences of the two principal neurotoxins of Enhydrina schistosa venom.</title>
        <authorList>
            <person name="Fryklund L."/>
            <person name="Eaker D."/>
            <person name="Karlsson E."/>
        </authorList>
    </citation>
    <scope>PROTEIN SEQUENCE</scope>
    <scope>SUBCELLULAR LOCATION</scope>
    <source>
        <tissue>Venom</tissue>
    </source>
</reference>
<name>3S15_HYDSC</name>
<comment type="function">
    <text evidence="2">Binds to muscle nicotinic acetylcholine receptor (nAChR) and inhibit acetylcholine from binding to the receptor, thereby impairing neuromuscular transmission.</text>
</comment>
<comment type="subcellular location">
    <subcellularLocation>
        <location evidence="3">Secreted</location>
    </subcellularLocation>
</comment>
<comment type="tissue specificity">
    <text evidence="4">Expressed by the venom gland.</text>
</comment>
<comment type="similarity">
    <text evidence="4">Belongs to the three-finger toxin family. Short-chain subfamily. Type I alpha-neurotoxin sub-subfamily.</text>
</comment>
<sequence>MTCCNQQSSQPKTTTNCAESSCYKKTWSDHRGTRIERGCGCPQVKSGIKLECCHTNECNN</sequence>
<accession>P62389</accession>
<accession>P01436</accession>
<accession>P25493</accession>
<dbReference type="PIR" id="B01705">
    <property type="entry name" value="N1EY15"/>
</dbReference>
<dbReference type="SMR" id="P62389"/>
<dbReference type="GO" id="GO:0005576">
    <property type="term" value="C:extracellular region"/>
    <property type="evidence" value="ECO:0007669"/>
    <property type="project" value="UniProtKB-SubCell"/>
</dbReference>
<dbReference type="GO" id="GO:0030550">
    <property type="term" value="F:acetylcholine receptor inhibitor activity"/>
    <property type="evidence" value="ECO:0007669"/>
    <property type="project" value="UniProtKB-KW"/>
</dbReference>
<dbReference type="GO" id="GO:0099106">
    <property type="term" value="F:ion channel regulator activity"/>
    <property type="evidence" value="ECO:0007669"/>
    <property type="project" value="UniProtKB-KW"/>
</dbReference>
<dbReference type="GO" id="GO:0090729">
    <property type="term" value="F:toxin activity"/>
    <property type="evidence" value="ECO:0007669"/>
    <property type="project" value="UniProtKB-KW"/>
</dbReference>
<dbReference type="CDD" id="cd00206">
    <property type="entry name" value="TFP_snake_toxin"/>
    <property type="match status" value="1"/>
</dbReference>
<dbReference type="Gene3D" id="2.10.60.10">
    <property type="entry name" value="CD59"/>
    <property type="match status" value="1"/>
</dbReference>
<dbReference type="InterPro" id="IPR003571">
    <property type="entry name" value="Snake_3FTx"/>
</dbReference>
<dbReference type="InterPro" id="IPR045860">
    <property type="entry name" value="Snake_toxin-like_sf"/>
</dbReference>
<dbReference type="InterPro" id="IPR018354">
    <property type="entry name" value="Snake_toxin_con_site"/>
</dbReference>
<dbReference type="InterPro" id="IPR054131">
    <property type="entry name" value="Toxin_cobra-type"/>
</dbReference>
<dbReference type="Pfam" id="PF21947">
    <property type="entry name" value="Toxin_cobra-type"/>
    <property type="match status" value="1"/>
</dbReference>
<dbReference type="SUPFAM" id="SSF57302">
    <property type="entry name" value="Snake toxin-like"/>
    <property type="match status" value="1"/>
</dbReference>
<dbReference type="PROSITE" id="PS00272">
    <property type="entry name" value="SNAKE_TOXIN"/>
    <property type="match status" value="1"/>
</dbReference>
<organism>
    <name type="scientific">Hydrophis schistosus</name>
    <name type="common">Beaked sea snake</name>
    <name type="synonym">Enhydrina schistosa</name>
    <dbReference type="NCBI Taxonomy" id="8682"/>
    <lineage>
        <taxon>Eukaryota</taxon>
        <taxon>Metazoa</taxon>
        <taxon>Chordata</taxon>
        <taxon>Craniata</taxon>
        <taxon>Vertebrata</taxon>
        <taxon>Euteleostomi</taxon>
        <taxon>Lepidosauria</taxon>
        <taxon>Squamata</taxon>
        <taxon>Bifurcata</taxon>
        <taxon>Unidentata</taxon>
        <taxon>Episquamata</taxon>
        <taxon>Toxicofera</taxon>
        <taxon>Serpentes</taxon>
        <taxon>Colubroidea</taxon>
        <taxon>Elapidae</taxon>
        <taxon>Hydrophiinae</taxon>
        <taxon>Hydrophis</taxon>
    </lineage>
</organism>